<proteinExistence type="inferred from homology"/>
<reference key="1">
    <citation type="journal article" date="2002" name="Nucleic Acids Res.">
        <title>Genome sequence of Shigella flexneri 2a: insights into pathogenicity through comparison with genomes of Escherichia coli K12 and O157.</title>
        <authorList>
            <person name="Jin Q."/>
            <person name="Yuan Z."/>
            <person name="Xu J."/>
            <person name="Wang Y."/>
            <person name="Shen Y."/>
            <person name="Lu W."/>
            <person name="Wang J."/>
            <person name="Liu H."/>
            <person name="Yang J."/>
            <person name="Yang F."/>
            <person name="Zhang X."/>
            <person name="Zhang J."/>
            <person name="Yang G."/>
            <person name="Wu H."/>
            <person name="Qu D."/>
            <person name="Dong J."/>
            <person name="Sun L."/>
            <person name="Xue Y."/>
            <person name="Zhao A."/>
            <person name="Gao Y."/>
            <person name="Zhu J."/>
            <person name="Kan B."/>
            <person name="Ding K."/>
            <person name="Chen S."/>
            <person name="Cheng H."/>
            <person name="Yao Z."/>
            <person name="He B."/>
            <person name="Chen R."/>
            <person name="Ma D."/>
            <person name="Qiang B."/>
            <person name="Wen Y."/>
            <person name="Hou Y."/>
            <person name="Yu J."/>
        </authorList>
    </citation>
    <scope>NUCLEOTIDE SEQUENCE [LARGE SCALE GENOMIC DNA]</scope>
    <source>
        <strain>301 / Serotype 2a</strain>
    </source>
</reference>
<reference key="2">
    <citation type="journal article" date="2003" name="Infect. Immun.">
        <title>Complete genome sequence and comparative genomics of Shigella flexneri serotype 2a strain 2457T.</title>
        <authorList>
            <person name="Wei J."/>
            <person name="Goldberg M.B."/>
            <person name="Burland V."/>
            <person name="Venkatesan M.M."/>
            <person name="Deng W."/>
            <person name="Fournier G."/>
            <person name="Mayhew G.F."/>
            <person name="Plunkett G. III"/>
            <person name="Rose D.J."/>
            <person name="Darling A."/>
            <person name="Mau B."/>
            <person name="Perna N.T."/>
            <person name="Payne S.M."/>
            <person name="Runyen-Janecky L.J."/>
            <person name="Zhou S."/>
            <person name="Schwartz D.C."/>
            <person name="Blattner F.R."/>
        </authorList>
    </citation>
    <scope>NUCLEOTIDE SEQUENCE [LARGE SCALE GENOMIC DNA]</scope>
    <source>
        <strain>ATCC 700930 / 2457T / Serotype 2a</strain>
    </source>
</reference>
<sequence length="214" mass="24083">MARTKLKFRLHRAVIVLFCLALLVALMQGASWFSQNHQRQRNPQLEELARTLARQVTLNVAPLMRTDSPDEKRIQAILDQLTDESRILDAGVYDEQGDLIARSGESVEVRDRLALDGKKAGGYFNQQIVEPIAGKNGPLGYLRLTLDTHTLATEAQQVDNTTNILRLMLLLSLAIGVVLTRTLLQGKRTRWQQSPFLLTASKPVPEEEESEKKE</sequence>
<accession>P0AGC8</accession>
<accession>P18838</accession>
<comment type="subcellular location">
    <subcellularLocation>
        <location evidence="1">Cell membrane</location>
        <topology evidence="1">Single-pass membrane protein</topology>
    </subcellularLocation>
</comment>
<comment type="PTM">
    <text evidence="1">The signal sequence may not be cleaved.</text>
</comment>
<comment type="similarity">
    <text evidence="3">Belongs to the Smp family.</text>
</comment>
<keyword id="KW-1003">Cell membrane</keyword>
<keyword id="KW-0472">Membrane</keyword>
<keyword id="KW-1185">Reference proteome</keyword>
<keyword id="KW-0732">Signal</keyword>
<keyword id="KW-0812">Transmembrane</keyword>
<keyword id="KW-1133">Transmembrane helix</keyword>
<dbReference type="EMBL" id="AE005674">
    <property type="protein sequence ID" value="AAN45833.1"/>
    <property type="molecule type" value="Genomic_DNA"/>
</dbReference>
<dbReference type="EMBL" id="AE014073">
    <property type="protein sequence ID" value="AAP19607.1"/>
    <property type="molecule type" value="Genomic_DNA"/>
</dbReference>
<dbReference type="RefSeq" id="NP_710126.1">
    <property type="nucleotide sequence ID" value="NC_004337.2"/>
</dbReference>
<dbReference type="RefSeq" id="WP_000124615.1">
    <property type="nucleotide sequence ID" value="NZ_WPGW01000013.1"/>
</dbReference>
<dbReference type="SMR" id="P0AGC8"/>
<dbReference type="STRING" id="198214.SF4419"/>
<dbReference type="PaxDb" id="198214-SF4419"/>
<dbReference type="GeneID" id="1026586"/>
<dbReference type="KEGG" id="sfl:SF4419"/>
<dbReference type="KEGG" id="sfx:S4690"/>
<dbReference type="PATRIC" id="fig|198214.7.peg.5208"/>
<dbReference type="HOGENOM" id="CLU_093836_0_0_6"/>
<dbReference type="Proteomes" id="UP000001006">
    <property type="component" value="Chromosome"/>
</dbReference>
<dbReference type="Proteomes" id="UP000002673">
    <property type="component" value="Chromosome"/>
</dbReference>
<dbReference type="GO" id="GO:0005886">
    <property type="term" value="C:plasma membrane"/>
    <property type="evidence" value="ECO:0007669"/>
    <property type="project" value="UniProtKB-SubCell"/>
</dbReference>
<dbReference type="InterPro" id="IPR019305">
    <property type="entry name" value="Uncharacterised_Smp"/>
</dbReference>
<dbReference type="NCBIfam" id="NF008419">
    <property type="entry name" value="PRK11246.1"/>
    <property type="match status" value="1"/>
</dbReference>
<dbReference type="Pfam" id="PF10144">
    <property type="entry name" value="SMP_2"/>
    <property type="match status" value="1"/>
</dbReference>
<gene>
    <name type="primary">smp</name>
    <name type="ordered locus">SF4419</name>
    <name type="ordered locus">S4690</name>
</gene>
<feature type="signal peptide" evidence="2">
    <location>
        <begin position="1"/>
        <end position="30"/>
    </location>
</feature>
<feature type="chain" id="PRO_0000045264" description="Protein Smp">
    <location>
        <begin position="31"/>
        <end position="214"/>
    </location>
</feature>
<feature type="transmembrane region" description="Helical" evidence="2">
    <location>
        <begin position="164"/>
        <end position="184"/>
    </location>
</feature>
<organism>
    <name type="scientific">Shigella flexneri</name>
    <dbReference type="NCBI Taxonomy" id="623"/>
    <lineage>
        <taxon>Bacteria</taxon>
        <taxon>Pseudomonadati</taxon>
        <taxon>Pseudomonadota</taxon>
        <taxon>Gammaproteobacteria</taxon>
        <taxon>Enterobacterales</taxon>
        <taxon>Enterobacteriaceae</taxon>
        <taxon>Shigella</taxon>
    </lineage>
</organism>
<evidence type="ECO:0000250" key="1"/>
<evidence type="ECO:0000255" key="2"/>
<evidence type="ECO:0000305" key="3"/>
<protein>
    <recommendedName>
        <fullName>Protein Smp</fullName>
    </recommendedName>
</protein>
<name>SMP_SHIFL</name>